<keyword id="KW-0963">Cytoplasm</keyword>
<keyword id="KW-0275">Fatty acid biosynthesis</keyword>
<keyword id="KW-0276">Fatty acid metabolism</keyword>
<keyword id="KW-0444">Lipid biosynthesis</keyword>
<keyword id="KW-0443">Lipid metabolism</keyword>
<keyword id="KW-0596">Phosphopantetheine</keyword>
<keyword id="KW-0597">Phosphoprotein</keyword>
<gene>
    <name evidence="1" type="primary">acpP</name>
    <name type="ordered locus">TC_0507</name>
</gene>
<proteinExistence type="inferred from homology"/>
<protein>
    <recommendedName>
        <fullName evidence="1">Acyl carrier protein</fullName>
        <shortName evidence="1">ACP</shortName>
    </recommendedName>
</protein>
<evidence type="ECO:0000255" key="1">
    <source>
        <dbReference type="HAMAP-Rule" id="MF_01217"/>
    </source>
</evidence>
<evidence type="ECO:0000255" key="2">
    <source>
        <dbReference type="PROSITE-ProRule" id="PRU00258"/>
    </source>
</evidence>
<feature type="chain" id="PRO_0000180126" description="Acyl carrier protein">
    <location>
        <begin position="1"/>
        <end position="77"/>
    </location>
</feature>
<feature type="domain" description="Carrier" evidence="2">
    <location>
        <begin position="1"/>
        <end position="76"/>
    </location>
</feature>
<feature type="modified residue" description="O-(pantetheine 4'-phosphoryl)serine" evidence="2">
    <location>
        <position position="36"/>
    </location>
</feature>
<dbReference type="EMBL" id="AE002160">
    <property type="protein sequence ID" value="AAF39349.1"/>
    <property type="molecule type" value="Genomic_DNA"/>
</dbReference>
<dbReference type="PIR" id="D81695">
    <property type="entry name" value="D81695"/>
</dbReference>
<dbReference type="RefSeq" id="WP_010230632.1">
    <property type="nucleotide sequence ID" value="NZ_CP063055.1"/>
</dbReference>
<dbReference type="SMR" id="Q9PKF8"/>
<dbReference type="GeneID" id="1245867"/>
<dbReference type="KEGG" id="cmu:TC_0507"/>
<dbReference type="eggNOG" id="COG0236">
    <property type="taxonomic scope" value="Bacteria"/>
</dbReference>
<dbReference type="HOGENOM" id="CLU_108696_5_1_0"/>
<dbReference type="OrthoDB" id="9804551at2"/>
<dbReference type="UniPathway" id="UPA00094"/>
<dbReference type="Proteomes" id="UP000000800">
    <property type="component" value="Chromosome"/>
</dbReference>
<dbReference type="GO" id="GO:0005829">
    <property type="term" value="C:cytosol"/>
    <property type="evidence" value="ECO:0007669"/>
    <property type="project" value="TreeGrafter"/>
</dbReference>
<dbReference type="GO" id="GO:0016020">
    <property type="term" value="C:membrane"/>
    <property type="evidence" value="ECO:0007669"/>
    <property type="project" value="GOC"/>
</dbReference>
<dbReference type="GO" id="GO:0000035">
    <property type="term" value="F:acyl binding"/>
    <property type="evidence" value="ECO:0007669"/>
    <property type="project" value="TreeGrafter"/>
</dbReference>
<dbReference type="GO" id="GO:0000036">
    <property type="term" value="F:acyl carrier activity"/>
    <property type="evidence" value="ECO:0007669"/>
    <property type="project" value="UniProtKB-UniRule"/>
</dbReference>
<dbReference type="GO" id="GO:0009245">
    <property type="term" value="P:lipid A biosynthetic process"/>
    <property type="evidence" value="ECO:0007669"/>
    <property type="project" value="TreeGrafter"/>
</dbReference>
<dbReference type="Gene3D" id="1.10.1200.10">
    <property type="entry name" value="ACP-like"/>
    <property type="match status" value="1"/>
</dbReference>
<dbReference type="HAMAP" id="MF_01217">
    <property type="entry name" value="Acyl_carrier"/>
    <property type="match status" value="1"/>
</dbReference>
<dbReference type="InterPro" id="IPR003231">
    <property type="entry name" value="ACP"/>
</dbReference>
<dbReference type="InterPro" id="IPR036736">
    <property type="entry name" value="ACP-like_sf"/>
</dbReference>
<dbReference type="InterPro" id="IPR009081">
    <property type="entry name" value="PP-bd_ACP"/>
</dbReference>
<dbReference type="InterPro" id="IPR006162">
    <property type="entry name" value="Ppantetheine_attach_site"/>
</dbReference>
<dbReference type="NCBIfam" id="TIGR00517">
    <property type="entry name" value="acyl_carrier"/>
    <property type="match status" value="1"/>
</dbReference>
<dbReference type="NCBIfam" id="NF002148">
    <property type="entry name" value="PRK00982.1-2"/>
    <property type="match status" value="1"/>
</dbReference>
<dbReference type="NCBIfam" id="NF002150">
    <property type="entry name" value="PRK00982.1-4"/>
    <property type="match status" value="1"/>
</dbReference>
<dbReference type="PANTHER" id="PTHR20863">
    <property type="entry name" value="ACYL CARRIER PROTEIN"/>
    <property type="match status" value="1"/>
</dbReference>
<dbReference type="PANTHER" id="PTHR20863:SF76">
    <property type="entry name" value="CARRIER DOMAIN-CONTAINING PROTEIN"/>
    <property type="match status" value="1"/>
</dbReference>
<dbReference type="Pfam" id="PF00550">
    <property type="entry name" value="PP-binding"/>
    <property type="match status" value="1"/>
</dbReference>
<dbReference type="SUPFAM" id="SSF47336">
    <property type="entry name" value="ACP-like"/>
    <property type="match status" value="1"/>
</dbReference>
<dbReference type="PROSITE" id="PS50075">
    <property type="entry name" value="CARRIER"/>
    <property type="match status" value="1"/>
</dbReference>
<dbReference type="PROSITE" id="PS00012">
    <property type="entry name" value="PHOSPHOPANTETHEINE"/>
    <property type="match status" value="1"/>
</dbReference>
<accession>Q9PKF8</accession>
<sequence length="77" mass="8722">MSLEDDVKAIIVDQLGVSPEDVKESSSFIEDLNADSLDLTELIMTLEEKFAFEISENDAEQLRTVGDVIKYIQERQN</sequence>
<comment type="function">
    <text evidence="1">Carrier of the growing fatty acid chain in fatty acid biosynthesis.</text>
</comment>
<comment type="pathway">
    <text evidence="1">Lipid metabolism; fatty acid biosynthesis.</text>
</comment>
<comment type="subcellular location">
    <subcellularLocation>
        <location evidence="1">Cytoplasm</location>
    </subcellularLocation>
</comment>
<comment type="PTM">
    <text evidence="1">4'-phosphopantetheine is transferred from CoA to a specific serine of apo-ACP by AcpS. This modification is essential for activity because fatty acids are bound in thioester linkage to the sulfhydryl of the prosthetic group.</text>
</comment>
<comment type="similarity">
    <text evidence="1">Belongs to the acyl carrier protein (ACP) family.</text>
</comment>
<name>ACP_CHLMU</name>
<organism>
    <name type="scientific">Chlamydia muridarum (strain MoPn / Nigg)</name>
    <dbReference type="NCBI Taxonomy" id="243161"/>
    <lineage>
        <taxon>Bacteria</taxon>
        <taxon>Pseudomonadati</taxon>
        <taxon>Chlamydiota</taxon>
        <taxon>Chlamydiia</taxon>
        <taxon>Chlamydiales</taxon>
        <taxon>Chlamydiaceae</taxon>
        <taxon>Chlamydia/Chlamydophila group</taxon>
        <taxon>Chlamydia</taxon>
    </lineage>
</organism>
<reference key="1">
    <citation type="journal article" date="2000" name="Nucleic Acids Res.">
        <title>Genome sequences of Chlamydia trachomatis MoPn and Chlamydia pneumoniae AR39.</title>
        <authorList>
            <person name="Read T.D."/>
            <person name="Brunham R.C."/>
            <person name="Shen C."/>
            <person name="Gill S.R."/>
            <person name="Heidelberg J.F."/>
            <person name="White O."/>
            <person name="Hickey E.K."/>
            <person name="Peterson J.D."/>
            <person name="Utterback T.R."/>
            <person name="Berry K.J."/>
            <person name="Bass S."/>
            <person name="Linher K.D."/>
            <person name="Weidman J.F."/>
            <person name="Khouri H.M."/>
            <person name="Craven B."/>
            <person name="Bowman C."/>
            <person name="Dodson R.J."/>
            <person name="Gwinn M.L."/>
            <person name="Nelson W.C."/>
            <person name="DeBoy R.T."/>
            <person name="Kolonay J.F."/>
            <person name="McClarty G."/>
            <person name="Salzberg S.L."/>
            <person name="Eisen J.A."/>
            <person name="Fraser C.M."/>
        </authorList>
    </citation>
    <scope>NUCLEOTIDE SEQUENCE [LARGE SCALE GENOMIC DNA]</scope>
    <source>
        <strain>MoPn / Nigg</strain>
    </source>
</reference>